<organism>
    <name type="scientific">Mus musculus</name>
    <name type="common">Mouse</name>
    <dbReference type="NCBI Taxonomy" id="10090"/>
    <lineage>
        <taxon>Eukaryota</taxon>
        <taxon>Metazoa</taxon>
        <taxon>Chordata</taxon>
        <taxon>Craniata</taxon>
        <taxon>Vertebrata</taxon>
        <taxon>Euteleostomi</taxon>
        <taxon>Mammalia</taxon>
        <taxon>Eutheria</taxon>
        <taxon>Euarchontoglires</taxon>
        <taxon>Glires</taxon>
        <taxon>Rodentia</taxon>
        <taxon>Myomorpha</taxon>
        <taxon>Muroidea</taxon>
        <taxon>Muridae</taxon>
        <taxon>Murinae</taxon>
        <taxon>Mus</taxon>
        <taxon>Mus</taxon>
    </lineage>
</organism>
<keyword id="KW-0963">Cytoplasm</keyword>
<keyword id="KW-0206">Cytoskeleton</keyword>
<keyword id="KW-0472">Membrane</keyword>
<keyword id="KW-0479">Metal-binding</keyword>
<keyword id="KW-0597">Phosphoprotein</keyword>
<keyword id="KW-1185">Reference proteome</keyword>
<keyword id="KW-0677">Repeat</keyword>
<keyword id="KW-0808">Transferase</keyword>
<keyword id="KW-0812">Transmembrane</keyword>
<keyword id="KW-1133">Transmembrane helix</keyword>
<keyword id="KW-0833">Ubl conjugation pathway</keyword>
<keyword id="KW-0862">Zinc</keyword>
<keyword id="KW-0863">Zinc-finger</keyword>
<name>RN19A_MOUSE</name>
<comment type="function">
    <text evidence="1 7">E3 ubiquitin-protein ligase which accepts ubiquitin from E2 ubiquitin-conjugating enzymes UBE2L3 and UBE2L6 in the form of a thioester and then directly transfers the ubiquitin to targeted substrates, such as SNCAIP or CASR.</text>
</comment>
<comment type="catalytic activity">
    <reaction evidence="2">
        <text>[E2 ubiquitin-conjugating enzyme]-S-ubiquitinyl-L-cysteine + [acceptor protein]-L-lysine = [E2 ubiquitin-conjugating enzyme]-L-cysteine + [acceptor protein]-N(6)-ubiquitinyl-L-lysine.</text>
        <dbReference type="EC" id="2.3.2.31"/>
    </reaction>
</comment>
<comment type="pathway">
    <text>Protein modification; protein ubiquitination.</text>
</comment>
<comment type="subunit">
    <text evidence="1 9">Interacts with UBE2L3 and UBE2L6. Also interacts with transcription factor Sp1. Interacts with SNCAIP and CASR (By similarity). Interacts with VCP.</text>
</comment>
<comment type="interaction">
    <interactant intactId="EBI-3508340">
        <id>P50636</id>
    </interactant>
    <interactant intactId="EBI-3508336">
        <id>Q9Z0P7</id>
        <label>Sufu</label>
    </interactant>
    <organismsDiffer>false</organismsDiffer>
    <experiments>3</experiments>
</comment>
<comment type="subcellular location">
    <subcellularLocation>
        <location evidence="11">Membrane</location>
        <topology evidence="11">Multi-pass membrane protein</topology>
    </subcellularLocation>
    <subcellularLocation>
        <location evidence="8">Cytoplasm</location>
        <location evidence="8">Cytoskeleton</location>
        <location evidence="8">Microtubule organizing center</location>
        <location evidence="8">Centrosome</location>
    </subcellularLocation>
    <text>Expressed primarily in the XY body of pachytene spermatocytes and in the centrosome of somatic and germ cells in all phases of the cell cycle.</text>
</comment>
<comment type="developmental stage">
    <text evidence="10">Preferentially expressed in both sexes during gametogenesis.</text>
</comment>
<comment type="domain">
    <text evidence="2">Members of the RBR family are atypical E3 ligases. They interact with the E2 conjugating enzyme UBE2L3 and function like HECT-type E3 enzymes: they bind E2s via the first RING domain, but require an obligate trans-thiolation step during the ubiquitin transfer, requiring a conserved cysteine residue in the second RING domain.</text>
</comment>
<comment type="similarity">
    <text evidence="11">Belongs to the RBR family. RNF19 subfamily.</text>
</comment>
<comment type="sequence caution" evidence="11">
    <conflict type="frameshift">
        <sequence resource="EMBL-CDS" id="CAA50643"/>
    </conflict>
</comment>
<evidence type="ECO:0000250" key="1"/>
<evidence type="ECO:0000250" key="2">
    <source>
        <dbReference type="UniProtKB" id="O60260"/>
    </source>
</evidence>
<evidence type="ECO:0000250" key="3">
    <source>
        <dbReference type="UniProtKB" id="Q9NV58"/>
    </source>
</evidence>
<evidence type="ECO:0000255" key="4"/>
<evidence type="ECO:0000255" key="5">
    <source>
        <dbReference type="PROSITE-ProRule" id="PRU01221"/>
    </source>
</evidence>
<evidence type="ECO:0000256" key="6">
    <source>
        <dbReference type="SAM" id="MobiDB-lite"/>
    </source>
</evidence>
<evidence type="ECO:0000269" key="7">
    <source>
    </source>
</evidence>
<evidence type="ECO:0000269" key="8">
    <source>
    </source>
</evidence>
<evidence type="ECO:0000269" key="9">
    <source>
    </source>
</evidence>
<evidence type="ECO:0000269" key="10">
    <source>
    </source>
</evidence>
<evidence type="ECO:0000305" key="11"/>
<reference key="1">
    <citation type="journal article" date="2000" name="Mech. Dev.">
        <title>XYbp, a novel RING-finger protein, is a component of the XY body of spermatocytes and centrosomes.</title>
        <authorList>
            <person name="Parraga M."/>
            <person name="del Mazo J."/>
        </authorList>
    </citation>
    <scope>NUCLEOTIDE SEQUENCE [MRNA]</scope>
    <scope>SUBCELLULAR LOCATION</scope>
    <source>
        <strain>SWR/J</strain>
        <tissue>Testis</tissue>
    </source>
</reference>
<reference key="2">
    <citation type="journal article" date="2005" name="Science">
        <title>The transcriptional landscape of the mammalian genome.</title>
        <authorList>
            <person name="Carninci P."/>
            <person name="Kasukawa T."/>
            <person name="Katayama S."/>
            <person name="Gough J."/>
            <person name="Frith M.C."/>
            <person name="Maeda N."/>
            <person name="Oyama R."/>
            <person name="Ravasi T."/>
            <person name="Lenhard B."/>
            <person name="Wells C."/>
            <person name="Kodzius R."/>
            <person name="Shimokawa K."/>
            <person name="Bajic V.B."/>
            <person name="Brenner S.E."/>
            <person name="Batalov S."/>
            <person name="Forrest A.R."/>
            <person name="Zavolan M."/>
            <person name="Davis M.J."/>
            <person name="Wilming L.G."/>
            <person name="Aidinis V."/>
            <person name="Allen J.E."/>
            <person name="Ambesi-Impiombato A."/>
            <person name="Apweiler R."/>
            <person name="Aturaliya R.N."/>
            <person name="Bailey T.L."/>
            <person name="Bansal M."/>
            <person name="Baxter L."/>
            <person name="Beisel K.W."/>
            <person name="Bersano T."/>
            <person name="Bono H."/>
            <person name="Chalk A.M."/>
            <person name="Chiu K.P."/>
            <person name="Choudhary V."/>
            <person name="Christoffels A."/>
            <person name="Clutterbuck D.R."/>
            <person name="Crowe M.L."/>
            <person name="Dalla E."/>
            <person name="Dalrymple B.P."/>
            <person name="de Bono B."/>
            <person name="Della Gatta G."/>
            <person name="di Bernardo D."/>
            <person name="Down T."/>
            <person name="Engstrom P."/>
            <person name="Fagiolini M."/>
            <person name="Faulkner G."/>
            <person name="Fletcher C.F."/>
            <person name="Fukushima T."/>
            <person name="Furuno M."/>
            <person name="Futaki S."/>
            <person name="Gariboldi M."/>
            <person name="Georgii-Hemming P."/>
            <person name="Gingeras T.R."/>
            <person name="Gojobori T."/>
            <person name="Green R.E."/>
            <person name="Gustincich S."/>
            <person name="Harbers M."/>
            <person name="Hayashi Y."/>
            <person name="Hensch T.K."/>
            <person name="Hirokawa N."/>
            <person name="Hill D."/>
            <person name="Huminiecki L."/>
            <person name="Iacono M."/>
            <person name="Ikeo K."/>
            <person name="Iwama A."/>
            <person name="Ishikawa T."/>
            <person name="Jakt M."/>
            <person name="Kanapin A."/>
            <person name="Katoh M."/>
            <person name="Kawasawa Y."/>
            <person name="Kelso J."/>
            <person name="Kitamura H."/>
            <person name="Kitano H."/>
            <person name="Kollias G."/>
            <person name="Krishnan S.P."/>
            <person name="Kruger A."/>
            <person name="Kummerfeld S.K."/>
            <person name="Kurochkin I.V."/>
            <person name="Lareau L.F."/>
            <person name="Lazarevic D."/>
            <person name="Lipovich L."/>
            <person name="Liu J."/>
            <person name="Liuni S."/>
            <person name="McWilliam S."/>
            <person name="Madan Babu M."/>
            <person name="Madera M."/>
            <person name="Marchionni L."/>
            <person name="Matsuda H."/>
            <person name="Matsuzawa S."/>
            <person name="Miki H."/>
            <person name="Mignone F."/>
            <person name="Miyake S."/>
            <person name="Morris K."/>
            <person name="Mottagui-Tabar S."/>
            <person name="Mulder N."/>
            <person name="Nakano N."/>
            <person name="Nakauchi H."/>
            <person name="Ng P."/>
            <person name="Nilsson R."/>
            <person name="Nishiguchi S."/>
            <person name="Nishikawa S."/>
            <person name="Nori F."/>
            <person name="Ohara O."/>
            <person name="Okazaki Y."/>
            <person name="Orlando V."/>
            <person name="Pang K.C."/>
            <person name="Pavan W.J."/>
            <person name="Pavesi G."/>
            <person name="Pesole G."/>
            <person name="Petrovsky N."/>
            <person name="Piazza S."/>
            <person name="Reed J."/>
            <person name="Reid J.F."/>
            <person name="Ring B.Z."/>
            <person name="Ringwald M."/>
            <person name="Rost B."/>
            <person name="Ruan Y."/>
            <person name="Salzberg S.L."/>
            <person name="Sandelin A."/>
            <person name="Schneider C."/>
            <person name="Schoenbach C."/>
            <person name="Sekiguchi K."/>
            <person name="Semple C.A."/>
            <person name="Seno S."/>
            <person name="Sessa L."/>
            <person name="Sheng Y."/>
            <person name="Shibata Y."/>
            <person name="Shimada H."/>
            <person name="Shimada K."/>
            <person name="Silva D."/>
            <person name="Sinclair B."/>
            <person name="Sperling S."/>
            <person name="Stupka E."/>
            <person name="Sugiura K."/>
            <person name="Sultana R."/>
            <person name="Takenaka Y."/>
            <person name="Taki K."/>
            <person name="Tammoja K."/>
            <person name="Tan S.L."/>
            <person name="Tang S."/>
            <person name="Taylor M.S."/>
            <person name="Tegner J."/>
            <person name="Teichmann S.A."/>
            <person name="Ueda H.R."/>
            <person name="van Nimwegen E."/>
            <person name="Verardo R."/>
            <person name="Wei C.L."/>
            <person name="Yagi K."/>
            <person name="Yamanishi H."/>
            <person name="Zabarovsky E."/>
            <person name="Zhu S."/>
            <person name="Zimmer A."/>
            <person name="Hide W."/>
            <person name="Bult C."/>
            <person name="Grimmond S.M."/>
            <person name="Teasdale R.D."/>
            <person name="Liu E.T."/>
            <person name="Brusic V."/>
            <person name="Quackenbush J."/>
            <person name="Wahlestedt C."/>
            <person name="Mattick J.S."/>
            <person name="Hume D.A."/>
            <person name="Kai C."/>
            <person name="Sasaki D."/>
            <person name="Tomaru Y."/>
            <person name="Fukuda S."/>
            <person name="Kanamori-Katayama M."/>
            <person name="Suzuki M."/>
            <person name="Aoki J."/>
            <person name="Arakawa T."/>
            <person name="Iida J."/>
            <person name="Imamura K."/>
            <person name="Itoh M."/>
            <person name="Kato T."/>
            <person name="Kawaji H."/>
            <person name="Kawagashira N."/>
            <person name="Kawashima T."/>
            <person name="Kojima M."/>
            <person name="Kondo S."/>
            <person name="Konno H."/>
            <person name="Nakano K."/>
            <person name="Ninomiya N."/>
            <person name="Nishio T."/>
            <person name="Okada M."/>
            <person name="Plessy C."/>
            <person name="Shibata K."/>
            <person name="Shiraki T."/>
            <person name="Suzuki S."/>
            <person name="Tagami M."/>
            <person name="Waki K."/>
            <person name="Watahiki A."/>
            <person name="Okamura-Oho Y."/>
            <person name="Suzuki H."/>
            <person name="Kawai J."/>
            <person name="Hayashizaki Y."/>
        </authorList>
    </citation>
    <scope>NUCLEOTIDE SEQUENCE [LARGE SCALE MRNA]</scope>
    <source>
        <strain>C57BL/6J</strain>
        <tissue>Melanocyte</tissue>
    </source>
</reference>
<reference key="3">
    <citation type="journal article" date="2004" name="Genome Res.">
        <title>The status, quality, and expansion of the NIH full-length cDNA project: the Mammalian Gene Collection (MGC).</title>
        <authorList>
            <consortium name="The MGC Project Team"/>
        </authorList>
    </citation>
    <scope>NUCLEOTIDE SEQUENCE [LARGE SCALE MRNA]</scope>
    <source>
        <strain>FVB/N</strain>
        <tissue>Mammary tumor</tissue>
    </source>
</reference>
<reference key="4">
    <citation type="journal article" date="1999" name="FEBS Lett.">
        <title>A family of structurally related RING finger proteins interacts specifically with the ubiquitin-conjugating enzyme UbcM4.</title>
        <authorList>
            <person name="Martinez-Noel G."/>
            <person name="Niedenthal R."/>
            <person name="Tamura T."/>
            <person name="Harbers K."/>
        </authorList>
    </citation>
    <scope>NUCLEOTIDE SEQUENCE [MRNA] OF 87-245</scope>
    <scope>FUNCTION</scope>
    <source>
        <strain>CD-1</strain>
    </source>
</reference>
<reference key="5">
    <citation type="journal article" date="1995" name="J. Reprod. Fertil.">
        <title>Cloning and characterization of genes expressed during gametogenesis of female and male mice.</title>
        <authorList>
            <person name="Lopez-Alanon D.M."/>
            <person name="del Mazo J."/>
        </authorList>
    </citation>
    <scope>NUCLEOTIDE SEQUENCE [GENOMIC DNA / MRNA] OF 380-840</scope>
    <scope>DEVELOPMENTAL STAGE</scope>
    <source>
        <strain>SWR/J</strain>
        <tissue>Ovary</tissue>
    </source>
</reference>
<reference key="6">
    <citation type="journal article" date="2004" name="J. Biol. Chem.">
        <title>Physical and functional interaction between dorfin and valosin-containing protein that are colocalized in ubiquitylated inclusions in neurodegenerative disorders.</title>
        <authorList>
            <person name="Ishigaki S."/>
            <person name="Hishikawa N."/>
            <person name="Niwa J."/>
            <person name="Iemura S."/>
            <person name="Natsume T."/>
            <person name="Hori S."/>
            <person name="Kakizuka A."/>
            <person name="Tanaka K."/>
            <person name="Sobue G."/>
        </authorList>
    </citation>
    <scope>INTERACTION WITH VCP</scope>
</reference>
<sequence>MQEQEISFIFKYNEGLCMNIDSDSILMSILDMSLHQQMGSDRDLQSSTSSVSLPSVKKAPKQRRISIGSLFRRKKDSKRKSRELNGGVDGIASIESIHSEMCADKNSIFSTNTSSDNGLTSISKQIGDFIECPLCLLRHSKDRFPDIMTCHHRSCVDCLRQYLRIEISESRVNISCPECTERFNPHDIRLILSDDVLMEKYEEFMLRRWLVADPDCRWCPAPDCGYAVIAFGCASCPKLTCGREGCGTEFCYHCKQIWHPNQTCDAARQERAQSLRLRTIRSSSISYSQESGAAADDIKPCPRCAAYIIKMNDGSCNHMTCAVCGCEFCWLCMKEISDLHYLSPSGCTFWGKKPWSRKKKILWQLGTLVGAPVGIALIAGIAIPAMIIGIPVYVGRKIHNRYEGKDVSKHKRNLAIAGGVTLSVIVSPVVAAVTVGIGVPIMLAYVYGVVPISLCRSGGCGVSAGNGKGVRIEFDDENDINVGGTNAAIDTTSVAEARHNPSIGEGSVGGLTGSLSASGSHMDRIGTIRDNLSETASTMALAGASITGSLSGSAMVNCFNRLEVQADVQKERCSLSGESGTVSLGTVSDNASTKAMAGSILNSYIPLDREGNSMEVQVDIESKPFKFRHNSGSSSVDDSGATRGHTGGASSGLPEGKSSATKWSKEATGGKKSKSGKLRKKGNMKINETREDMDAQLLEQQSTNSSEFEAPSLSDSMPSVADSHSSHFSEFSCSDLESMRTSCSHGSSDCHARFTAVNTLPEVENDRLENSPHQCSSALLSKAASCSDVPQPSHAADEHGTSRSGGKPMVDLCFGDALRETNNNHSHQTADLKVAVQTEI</sequence>
<protein>
    <recommendedName>
        <fullName>E3 ubiquitin-protein ligase RNF19A</fullName>
        <ecNumber evidence="2">2.3.2.31</ecNumber>
    </recommendedName>
    <alternativeName>
        <fullName>Double ring-finger protein</fullName>
        <shortName>Dorfin</shortName>
    </alternativeName>
    <alternativeName>
        <fullName>Gametogenesis-expressed protein GEG-154</fullName>
    </alternativeName>
    <alternativeName>
        <fullName>RING finger protein 19A</fullName>
    </alternativeName>
    <alternativeName>
        <fullName>UBCM4-interacting protein 117</fullName>
        <shortName>UIP117</shortName>
    </alternativeName>
    <alternativeName>
        <fullName>XY body protein</fullName>
        <shortName>XYbp</shortName>
    </alternativeName>
</protein>
<accession>P50636</accession>
<accession>Q3UGT2</accession>
<accession>Q9QUJ5</accession>
<proteinExistence type="evidence at protein level"/>
<gene>
    <name type="primary">Rnf19a</name>
    <name type="synonym">Geg-154</name>
    <name type="synonym">Rnf19</name>
    <name type="synonym">Xybp</name>
</gene>
<feature type="chain" id="PRO_0000056062" description="E3 ubiquitin-protein ligase RNF19A">
    <location>
        <begin position="1"/>
        <end position="840"/>
    </location>
</feature>
<feature type="transmembrane region" description="Helical" evidence="4">
    <location>
        <begin position="368"/>
        <end position="388"/>
    </location>
</feature>
<feature type="transmembrane region" description="Helical" evidence="4">
    <location>
        <begin position="424"/>
        <end position="444"/>
    </location>
</feature>
<feature type="zinc finger region" description="RING-type 1" evidence="5">
    <location>
        <begin position="132"/>
        <end position="179"/>
    </location>
</feature>
<feature type="zinc finger region" description="IBR-type" evidence="5">
    <location>
        <begin position="199"/>
        <end position="264"/>
    </location>
</feature>
<feature type="zinc finger region" description="RING-type 2; atypical" evidence="5">
    <location>
        <begin position="301"/>
        <end position="332"/>
    </location>
</feature>
<feature type="region of interest" description="Disordered" evidence="6">
    <location>
        <begin position="40"/>
        <end position="61"/>
    </location>
</feature>
<feature type="region of interest" description="TRIAD supradomain" evidence="5">
    <location>
        <begin position="128"/>
        <end position="351"/>
    </location>
</feature>
<feature type="region of interest" description="Disordered" evidence="6">
    <location>
        <begin position="625"/>
        <end position="685"/>
    </location>
</feature>
<feature type="region of interest" description="Interaction with CASR" evidence="1">
    <location>
        <begin position="660"/>
        <end position="840"/>
    </location>
</feature>
<feature type="region of interest" description="Disordered" evidence="6">
    <location>
        <begin position="700"/>
        <end position="721"/>
    </location>
</feature>
<feature type="region of interest" description="Disordered" evidence="6">
    <location>
        <begin position="786"/>
        <end position="808"/>
    </location>
</feature>
<feature type="compositionally biased region" description="Low complexity" evidence="6">
    <location>
        <begin position="45"/>
        <end position="56"/>
    </location>
</feature>
<feature type="compositionally biased region" description="Basic residues" evidence="6">
    <location>
        <begin position="671"/>
        <end position="683"/>
    </location>
</feature>
<feature type="compositionally biased region" description="Polar residues" evidence="6">
    <location>
        <begin position="700"/>
        <end position="717"/>
    </location>
</feature>
<feature type="active site" evidence="5">
    <location>
        <position position="316"/>
    </location>
</feature>
<feature type="binding site" evidence="5">
    <location>
        <position position="132"/>
    </location>
    <ligand>
        <name>Zn(2+)</name>
        <dbReference type="ChEBI" id="CHEBI:29105"/>
        <label>1</label>
    </ligand>
</feature>
<feature type="binding site" evidence="5">
    <location>
        <position position="135"/>
    </location>
    <ligand>
        <name>Zn(2+)</name>
        <dbReference type="ChEBI" id="CHEBI:29105"/>
        <label>1</label>
    </ligand>
</feature>
<feature type="binding site" evidence="5">
    <location>
        <position position="150"/>
    </location>
    <ligand>
        <name>Zn(2+)</name>
        <dbReference type="ChEBI" id="CHEBI:29105"/>
        <label>2</label>
    </ligand>
</feature>
<feature type="binding site" evidence="5">
    <location>
        <position position="152"/>
    </location>
    <ligand>
        <name>Zn(2+)</name>
        <dbReference type="ChEBI" id="CHEBI:29105"/>
        <label>2</label>
    </ligand>
</feature>
<feature type="binding site" evidence="5">
    <location>
        <position position="155"/>
    </location>
    <ligand>
        <name>Zn(2+)</name>
        <dbReference type="ChEBI" id="CHEBI:29105"/>
        <label>1</label>
    </ligand>
</feature>
<feature type="binding site" evidence="5">
    <location>
        <position position="158"/>
    </location>
    <ligand>
        <name>Zn(2+)</name>
        <dbReference type="ChEBI" id="CHEBI:29105"/>
        <label>1</label>
    </ligand>
</feature>
<feature type="binding site" evidence="5">
    <location>
        <position position="176"/>
    </location>
    <ligand>
        <name>Zn(2+)</name>
        <dbReference type="ChEBI" id="CHEBI:29105"/>
        <label>2</label>
    </ligand>
</feature>
<feature type="binding site" evidence="5">
    <location>
        <position position="179"/>
    </location>
    <ligand>
        <name>Zn(2+)</name>
        <dbReference type="ChEBI" id="CHEBI:29105"/>
        <label>2</label>
    </ligand>
</feature>
<feature type="binding site" evidence="5">
    <location>
        <position position="219"/>
    </location>
    <ligand>
        <name>Zn(2+)</name>
        <dbReference type="ChEBI" id="CHEBI:29105"/>
        <label>3</label>
    </ligand>
</feature>
<feature type="binding site" evidence="5">
    <location>
        <position position="224"/>
    </location>
    <ligand>
        <name>Zn(2+)</name>
        <dbReference type="ChEBI" id="CHEBI:29105"/>
        <label>3</label>
    </ligand>
</feature>
<feature type="binding site" evidence="5">
    <location>
        <position position="241"/>
    </location>
    <ligand>
        <name>Zn(2+)</name>
        <dbReference type="ChEBI" id="CHEBI:29105"/>
        <label>3</label>
    </ligand>
</feature>
<feature type="binding site" evidence="5">
    <location>
        <position position="246"/>
    </location>
    <ligand>
        <name>Zn(2+)</name>
        <dbReference type="ChEBI" id="CHEBI:29105"/>
        <label>3</label>
    </ligand>
</feature>
<feature type="binding site" evidence="5">
    <location>
        <position position="251"/>
    </location>
    <ligand>
        <name>Zn(2+)</name>
        <dbReference type="ChEBI" id="CHEBI:29105"/>
        <label>4</label>
    </ligand>
</feature>
<feature type="binding site" evidence="5">
    <location>
        <position position="254"/>
    </location>
    <ligand>
        <name>Zn(2+)</name>
        <dbReference type="ChEBI" id="CHEBI:29105"/>
        <label>4</label>
    </ligand>
</feature>
<feature type="binding site" evidence="5">
    <location>
        <position position="259"/>
    </location>
    <ligand>
        <name>Zn(2+)</name>
        <dbReference type="ChEBI" id="CHEBI:29105"/>
        <label>4</label>
    </ligand>
</feature>
<feature type="binding site" evidence="5">
    <location>
        <position position="264"/>
    </location>
    <ligand>
        <name>Zn(2+)</name>
        <dbReference type="ChEBI" id="CHEBI:29105"/>
        <label>4</label>
    </ligand>
</feature>
<feature type="binding site" evidence="5">
    <location>
        <position position="301"/>
    </location>
    <ligand>
        <name>Zn(2+)</name>
        <dbReference type="ChEBI" id="CHEBI:29105"/>
        <label>5</label>
    </ligand>
</feature>
<feature type="binding site" evidence="5">
    <location>
        <position position="304"/>
    </location>
    <ligand>
        <name>Zn(2+)</name>
        <dbReference type="ChEBI" id="CHEBI:29105"/>
        <label>5</label>
    </ligand>
</feature>
<feature type="binding site" evidence="5">
    <location>
        <position position="321"/>
    </location>
    <ligand>
        <name>Zn(2+)</name>
        <dbReference type="ChEBI" id="CHEBI:29105"/>
        <label>5</label>
    </ligand>
</feature>
<feature type="binding site" evidence="5">
    <location>
        <position position="324"/>
    </location>
    <ligand>
        <name>Zn(2+)</name>
        <dbReference type="ChEBI" id="CHEBI:29105"/>
        <label>5</label>
    </ligand>
</feature>
<feature type="binding site" evidence="5">
    <location>
        <position position="329"/>
    </location>
    <ligand>
        <name>Zn(2+)</name>
        <dbReference type="ChEBI" id="CHEBI:29105"/>
        <label>6</label>
    </ligand>
</feature>
<feature type="binding site" evidence="5">
    <location>
        <position position="332"/>
    </location>
    <ligand>
        <name>Zn(2+)</name>
        <dbReference type="ChEBI" id="CHEBI:29105"/>
        <label>6</label>
    </ligand>
</feature>
<feature type="binding site" evidence="5">
    <location>
        <position position="340"/>
    </location>
    <ligand>
        <name>Zn(2+)</name>
        <dbReference type="ChEBI" id="CHEBI:29105"/>
        <label>6</label>
    </ligand>
</feature>
<feature type="binding site" evidence="5">
    <location>
        <position position="347"/>
    </location>
    <ligand>
        <name>Zn(2+)</name>
        <dbReference type="ChEBI" id="CHEBI:29105"/>
        <label>6</label>
    </ligand>
</feature>
<feature type="modified residue" description="Phosphoserine" evidence="3">
    <location>
        <position position="631"/>
    </location>
</feature>
<feature type="sequence conflict" description="In Ref. 2; BAE28125." evidence="11" ref="2">
    <original>R</original>
    <variation>G</variation>
    <location>
        <position position="207"/>
    </location>
</feature>
<feature type="sequence conflict" description="In Ref. 2; BAE28125." evidence="11" ref="2">
    <original>N</original>
    <variation>D</variation>
    <location>
        <position position="466"/>
    </location>
</feature>
<dbReference type="EC" id="2.3.2.31" evidence="2"/>
<dbReference type="EMBL" id="AF120206">
    <property type="protein sequence ID" value="AAF18302.1"/>
    <property type="molecule type" value="mRNA"/>
</dbReference>
<dbReference type="EMBL" id="AF120207">
    <property type="protein sequence ID" value="AAF18303.1"/>
    <property type="molecule type" value="mRNA"/>
</dbReference>
<dbReference type="EMBL" id="AK147768">
    <property type="protein sequence ID" value="BAE28125.1"/>
    <property type="molecule type" value="mRNA"/>
</dbReference>
<dbReference type="EMBL" id="BC040769">
    <property type="protein sequence ID" value="AAH40769.1"/>
    <property type="molecule type" value="mRNA"/>
</dbReference>
<dbReference type="EMBL" id="AF360999">
    <property type="protein sequence ID" value="AAK51469.1"/>
    <property type="molecule type" value="mRNA"/>
</dbReference>
<dbReference type="EMBL" id="AF071560">
    <property type="protein sequence ID" value="AAG37798.1"/>
    <property type="molecule type" value="Genomic_DNA"/>
</dbReference>
<dbReference type="EMBL" id="X71642">
    <property type="protein sequence ID" value="CAA50643.1"/>
    <property type="status" value="ALT_FRAME"/>
    <property type="molecule type" value="mRNA"/>
</dbReference>
<dbReference type="CCDS" id="CCDS27427.1"/>
<dbReference type="PIR" id="I48361">
    <property type="entry name" value="I48361"/>
</dbReference>
<dbReference type="RefSeq" id="NP_038951.1">
    <property type="nucleotide sequence ID" value="NM_013923.2"/>
</dbReference>
<dbReference type="BioGRID" id="206022">
    <property type="interactions" value="6"/>
</dbReference>
<dbReference type="FunCoup" id="P50636">
    <property type="interactions" value="1156"/>
</dbReference>
<dbReference type="IntAct" id="P50636">
    <property type="interactions" value="5"/>
</dbReference>
<dbReference type="MINT" id="P50636"/>
<dbReference type="STRING" id="10090.ENSMUSP00000022890"/>
<dbReference type="GlyGen" id="P50636">
    <property type="glycosylation" value="1 site"/>
</dbReference>
<dbReference type="iPTMnet" id="P50636"/>
<dbReference type="PhosphoSitePlus" id="P50636"/>
<dbReference type="PaxDb" id="10090-ENSMUSP00000022890"/>
<dbReference type="ProteomicsDB" id="300422"/>
<dbReference type="Antibodypedia" id="3140">
    <property type="antibodies" value="215 antibodies from 29 providers"/>
</dbReference>
<dbReference type="DNASU" id="30945"/>
<dbReference type="Ensembl" id="ENSMUST00000022890.10">
    <property type="protein sequence ID" value="ENSMUSP00000022890.9"/>
    <property type="gene ID" value="ENSMUSG00000022280.10"/>
</dbReference>
<dbReference type="GeneID" id="30945"/>
<dbReference type="KEGG" id="mmu:30945"/>
<dbReference type="UCSC" id="uc007vmq.1">
    <property type="organism name" value="mouse"/>
</dbReference>
<dbReference type="AGR" id="MGI:1353623"/>
<dbReference type="CTD" id="25897"/>
<dbReference type="MGI" id="MGI:1353623">
    <property type="gene designation" value="Rnf19a"/>
</dbReference>
<dbReference type="VEuPathDB" id="HostDB:ENSMUSG00000022280"/>
<dbReference type="eggNOG" id="KOG1815">
    <property type="taxonomic scope" value="Eukaryota"/>
</dbReference>
<dbReference type="GeneTree" id="ENSGT00940000158703"/>
<dbReference type="HOGENOM" id="CLU_016793_1_0_1"/>
<dbReference type="InParanoid" id="P50636"/>
<dbReference type="OMA" id="HQCSISL"/>
<dbReference type="OrthoDB" id="1431934at2759"/>
<dbReference type="PhylomeDB" id="P50636"/>
<dbReference type="TreeFam" id="TF324777"/>
<dbReference type="Reactome" id="R-MMU-983168">
    <property type="pathway name" value="Antigen processing: Ubiquitination &amp; Proteasome degradation"/>
</dbReference>
<dbReference type="UniPathway" id="UPA00143"/>
<dbReference type="BioGRID-ORCS" id="30945">
    <property type="hits" value="0 hits in 76 CRISPR screens"/>
</dbReference>
<dbReference type="ChiTaRS" id="Rnf19a">
    <property type="organism name" value="mouse"/>
</dbReference>
<dbReference type="PRO" id="PR:P50636"/>
<dbReference type="Proteomes" id="UP000000589">
    <property type="component" value="Chromosome 15"/>
</dbReference>
<dbReference type="RNAct" id="P50636">
    <property type="molecule type" value="protein"/>
</dbReference>
<dbReference type="Bgee" id="ENSMUSG00000022280">
    <property type="expression patterns" value="Expressed in spermatid and 229 other cell types or tissues"/>
</dbReference>
<dbReference type="ExpressionAtlas" id="P50636">
    <property type="expression patterns" value="baseline and differential"/>
</dbReference>
<dbReference type="GO" id="GO:0005813">
    <property type="term" value="C:centrosome"/>
    <property type="evidence" value="ECO:0007669"/>
    <property type="project" value="UniProtKB-SubCell"/>
</dbReference>
<dbReference type="GO" id="GO:0005737">
    <property type="term" value="C:cytoplasm"/>
    <property type="evidence" value="ECO:0007669"/>
    <property type="project" value="UniProtKB-KW"/>
</dbReference>
<dbReference type="GO" id="GO:0098978">
    <property type="term" value="C:glutamatergic synapse"/>
    <property type="evidence" value="ECO:0000314"/>
    <property type="project" value="SynGO"/>
</dbReference>
<dbReference type="GO" id="GO:0098686">
    <property type="term" value="C:hippocampal mossy fiber to CA3 synapse"/>
    <property type="evidence" value="ECO:0000314"/>
    <property type="project" value="SynGO"/>
</dbReference>
<dbReference type="GO" id="GO:0016020">
    <property type="term" value="C:membrane"/>
    <property type="evidence" value="ECO:0007669"/>
    <property type="project" value="UniProtKB-SubCell"/>
</dbReference>
<dbReference type="GO" id="GO:0098794">
    <property type="term" value="C:postsynapse"/>
    <property type="evidence" value="ECO:0007669"/>
    <property type="project" value="GOC"/>
</dbReference>
<dbReference type="GO" id="GO:0004842">
    <property type="term" value="F:ubiquitin-protein transferase activity"/>
    <property type="evidence" value="ECO:0007669"/>
    <property type="project" value="InterPro"/>
</dbReference>
<dbReference type="GO" id="GO:0008270">
    <property type="term" value="F:zinc ion binding"/>
    <property type="evidence" value="ECO:0007669"/>
    <property type="project" value="UniProtKB-KW"/>
</dbReference>
<dbReference type="GO" id="GO:0016567">
    <property type="term" value="P:protein ubiquitination"/>
    <property type="evidence" value="ECO:0007669"/>
    <property type="project" value="UniProtKB-UniPathway"/>
</dbReference>
<dbReference type="GO" id="GO:0099576">
    <property type="term" value="P:regulation of protein catabolic process at postsynapse, modulating synaptic transmission"/>
    <property type="evidence" value="ECO:0000314"/>
    <property type="project" value="SynGO"/>
</dbReference>
<dbReference type="CDD" id="cd20362">
    <property type="entry name" value="BRcat_RBR_RNF19A"/>
    <property type="match status" value="1"/>
</dbReference>
<dbReference type="CDD" id="cd20355">
    <property type="entry name" value="Rcat_RBR_RNF19"/>
    <property type="match status" value="1"/>
</dbReference>
<dbReference type="CDD" id="cd16775">
    <property type="entry name" value="RING-HC_RBR_RNF19A"/>
    <property type="match status" value="1"/>
</dbReference>
<dbReference type="FunFam" id="1.20.120.1750:FF:000001">
    <property type="entry name" value="RBR-type E3 ubiquitin transferase"/>
    <property type="match status" value="1"/>
</dbReference>
<dbReference type="FunFam" id="2.20.25.20:FF:000004">
    <property type="entry name" value="RBR-type E3 ubiquitin transferase"/>
    <property type="match status" value="1"/>
</dbReference>
<dbReference type="FunFam" id="3.30.40.10:FF:000052">
    <property type="entry name" value="RBR-type E3 ubiquitin transferase"/>
    <property type="match status" value="1"/>
</dbReference>
<dbReference type="Gene3D" id="1.20.120.1750">
    <property type="match status" value="1"/>
</dbReference>
<dbReference type="Gene3D" id="2.20.25.20">
    <property type="match status" value="1"/>
</dbReference>
<dbReference type="Gene3D" id="3.30.40.10">
    <property type="entry name" value="Zinc/RING finger domain, C3HC4 (zinc finger)"/>
    <property type="match status" value="1"/>
</dbReference>
<dbReference type="InterPro" id="IPR031127">
    <property type="entry name" value="E3_UB_ligase_RBR"/>
</dbReference>
<dbReference type="InterPro" id="IPR002867">
    <property type="entry name" value="IBR_dom"/>
</dbReference>
<dbReference type="InterPro" id="IPR044066">
    <property type="entry name" value="TRIAD_supradom"/>
</dbReference>
<dbReference type="InterPro" id="IPR001841">
    <property type="entry name" value="Znf_RING"/>
</dbReference>
<dbReference type="InterPro" id="IPR013083">
    <property type="entry name" value="Znf_RING/FYVE/PHD"/>
</dbReference>
<dbReference type="PANTHER" id="PTHR11685">
    <property type="entry name" value="RBR FAMILY RING FINGER AND IBR DOMAIN-CONTAINING"/>
    <property type="match status" value="1"/>
</dbReference>
<dbReference type="Pfam" id="PF01485">
    <property type="entry name" value="IBR"/>
    <property type="match status" value="2"/>
</dbReference>
<dbReference type="SMART" id="SM00647">
    <property type="entry name" value="IBR"/>
    <property type="match status" value="2"/>
</dbReference>
<dbReference type="SMART" id="SM00184">
    <property type="entry name" value="RING"/>
    <property type="match status" value="1"/>
</dbReference>
<dbReference type="SUPFAM" id="SSF57850">
    <property type="entry name" value="RING/U-box"/>
    <property type="match status" value="3"/>
</dbReference>
<dbReference type="PROSITE" id="PS51873">
    <property type="entry name" value="TRIAD"/>
    <property type="match status" value="1"/>
</dbReference>
<dbReference type="PROSITE" id="PS50089">
    <property type="entry name" value="ZF_RING_2"/>
    <property type="match status" value="1"/>
</dbReference>